<proteinExistence type="inferred from homology"/>
<reference key="1">
    <citation type="submission" date="2007-04" db="EMBL/GenBank/DDBJ databases">
        <title>Complete sequence of chromosome of Rhodobacter sphaeroides ATCC 17025.</title>
        <authorList>
            <consortium name="US DOE Joint Genome Institute"/>
            <person name="Copeland A."/>
            <person name="Lucas S."/>
            <person name="Lapidus A."/>
            <person name="Barry K."/>
            <person name="Detter J.C."/>
            <person name="Glavina del Rio T."/>
            <person name="Hammon N."/>
            <person name="Israni S."/>
            <person name="Dalin E."/>
            <person name="Tice H."/>
            <person name="Pitluck S."/>
            <person name="Chertkov O."/>
            <person name="Brettin T."/>
            <person name="Bruce D."/>
            <person name="Han C."/>
            <person name="Schmutz J."/>
            <person name="Larimer F."/>
            <person name="Land M."/>
            <person name="Hauser L."/>
            <person name="Kyrpides N."/>
            <person name="Kim E."/>
            <person name="Richardson P."/>
            <person name="Mackenzie C."/>
            <person name="Choudhary M."/>
            <person name="Donohue T.J."/>
            <person name="Kaplan S."/>
        </authorList>
    </citation>
    <scope>NUCLEOTIDE SEQUENCE [LARGE SCALE GENOMIC DNA]</scope>
    <source>
        <strain>ATCC 17025 / ATH 2.4.3</strain>
    </source>
</reference>
<gene>
    <name evidence="1" type="primary">gatC</name>
    <name type="ordered locus">Rsph17025_2227</name>
</gene>
<dbReference type="EC" id="6.3.5.-" evidence="1"/>
<dbReference type="EMBL" id="CP000661">
    <property type="protein sequence ID" value="ABP71117.1"/>
    <property type="molecule type" value="Genomic_DNA"/>
</dbReference>
<dbReference type="SMR" id="A4WUQ3"/>
<dbReference type="STRING" id="349102.Rsph17025_2227"/>
<dbReference type="KEGG" id="rsq:Rsph17025_2227"/>
<dbReference type="eggNOG" id="COG0721">
    <property type="taxonomic scope" value="Bacteria"/>
</dbReference>
<dbReference type="HOGENOM" id="CLU_105899_2_0_5"/>
<dbReference type="BioCyc" id="RSPH349102:G1G8M-2296-MONOMER"/>
<dbReference type="GO" id="GO:0050566">
    <property type="term" value="F:asparaginyl-tRNA synthase (glutamine-hydrolyzing) activity"/>
    <property type="evidence" value="ECO:0007669"/>
    <property type="project" value="RHEA"/>
</dbReference>
<dbReference type="GO" id="GO:0005524">
    <property type="term" value="F:ATP binding"/>
    <property type="evidence" value="ECO:0007669"/>
    <property type="project" value="UniProtKB-KW"/>
</dbReference>
<dbReference type="GO" id="GO:0050567">
    <property type="term" value="F:glutaminyl-tRNA synthase (glutamine-hydrolyzing) activity"/>
    <property type="evidence" value="ECO:0007669"/>
    <property type="project" value="UniProtKB-UniRule"/>
</dbReference>
<dbReference type="GO" id="GO:0070681">
    <property type="term" value="P:glutaminyl-tRNAGln biosynthesis via transamidation"/>
    <property type="evidence" value="ECO:0007669"/>
    <property type="project" value="TreeGrafter"/>
</dbReference>
<dbReference type="GO" id="GO:0006450">
    <property type="term" value="P:regulation of translational fidelity"/>
    <property type="evidence" value="ECO:0007669"/>
    <property type="project" value="InterPro"/>
</dbReference>
<dbReference type="GO" id="GO:0006412">
    <property type="term" value="P:translation"/>
    <property type="evidence" value="ECO:0007669"/>
    <property type="project" value="UniProtKB-UniRule"/>
</dbReference>
<dbReference type="Gene3D" id="1.10.20.60">
    <property type="entry name" value="Glu-tRNAGln amidotransferase C subunit, N-terminal domain"/>
    <property type="match status" value="1"/>
</dbReference>
<dbReference type="HAMAP" id="MF_00122">
    <property type="entry name" value="GatC"/>
    <property type="match status" value="1"/>
</dbReference>
<dbReference type="InterPro" id="IPR036113">
    <property type="entry name" value="Asp/Glu-ADT_sf_sub_c"/>
</dbReference>
<dbReference type="InterPro" id="IPR003837">
    <property type="entry name" value="GatC"/>
</dbReference>
<dbReference type="NCBIfam" id="TIGR00135">
    <property type="entry name" value="gatC"/>
    <property type="match status" value="1"/>
</dbReference>
<dbReference type="PANTHER" id="PTHR15004">
    <property type="entry name" value="GLUTAMYL-TRNA(GLN) AMIDOTRANSFERASE SUBUNIT C, MITOCHONDRIAL"/>
    <property type="match status" value="1"/>
</dbReference>
<dbReference type="PANTHER" id="PTHR15004:SF0">
    <property type="entry name" value="GLUTAMYL-TRNA(GLN) AMIDOTRANSFERASE SUBUNIT C, MITOCHONDRIAL"/>
    <property type="match status" value="1"/>
</dbReference>
<dbReference type="Pfam" id="PF02686">
    <property type="entry name" value="GatC"/>
    <property type="match status" value="1"/>
</dbReference>
<dbReference type="SUPFAM" id="SSF141000">
    <property type="entry name" value="Glu-tRNAGln amidotransferase C subunit"/>
    <property type="match status" value="1"/>
</dbReference>
<comment type="function">
    <text evidence="1">Allows the formation of correctly charged Asn-tRNA(Asn) or Gln-tRNA(Gln) through the transamidation of misacylated Asp-tRNA(Asn) or Glu-tRNA(Gln) in organisms which lack either or both of asparaginyl-tRNA or glutaminyl-tRNA synthetases. The reaction takes place in the presence of glutamine and ATP through an activated phospho-Asp-tRNA(Asn) or phospho-Glu-tRNA(Gln).</text>
</comment>
<comment type="catalytic activity">
    <reaction evidence="1">
        <text>L-glutamyl-tRNA(Gln) + L-glutamine + ATP + H2O = L-glutaminyl-tRNA(Gln) + L-glutamate + ADP + phosphate + H(+)</text>
        <dbReference type="Rhea" id="RHEA:17521"/>
        <dbReference type="Rhea" id="RHEA-COMP:9681"/>
        <dbReference type="Rhea" id="RHEA-COMP:9684"/>
        <dbReference type="ChEBI" id="CHEBI:15377"/>
        <dbReference type="ChEBI" id="CHEBI:15378"/>
        <dbReference type="ChEBI" id="CHEBI:29985"/>
        <dbReference type="ChEBI" id="CHEBI:30616"/>
        <dbReference type="ChEBI" id="CHEBI:43474"/>
        <dbReference type="ChEBI" id="CHEBI:58359"/>
        <dbReference type="ChEBI" id="CHEBI:78520"/>
        <dbReference type="ChEBI" id="CHEBI:78521"/>
        <dbReference type="ChEBI" id="CHEBI:456216"/>
    </reaction>
</comment>
<comment type="catalytic activity">
    <reaction evidence="1">
        <text>L-aspartyl-tRNA(Asn) + L-glutamine + ATP + H2O = L-asparaginyl-tRNA(Asn) + L-glutamate + ADP + phosphate + 2 H(+)</text>
        <dbReference type="Rhea" id="RHEA:14513"/>
        <dbReference type="Rhea" id="RHEA-COMP:9674"/>
        <dbReference type="Rhea" id="RHEA-COMP:9677"/>
        <dbReference type="ChEBI" id="CHEBI:15377"/>
        <dbReference type="ChEBI" id="CHEBI:15378"/>
        <dbReference type="ChEBI" id="CHEBI:29985"/>
        <dbReference type="ChEBI" id="CHEBI:30616"/>
        <dbReference type="ChEBI" id="CHEBI:43474"/>
        <dbReference type="ChEBI" id="CHEBI:58359"/>
        <dbReference type="ChEBI" id="CHEBI:78515"/>
        <dbReference type="ChEBI" id="CHEBI:78516"/>
        <dbReference type="ChEBI" id="CHEBI:456216"/>
    </reaction>
</comment>
<comment type="subunit">
    <text evidence="1">Heterotrimer of A, B and C subunits.</text>
</comment>
<comment type="similarity">
    <text evidence="1">Belongs to the GatC family.</text>
</comment>
<keyword id="KW-0067">ATP-binding</keyword>
<keyword id="KW-0436">Ligase</keyword>
<keyword id="KW-0547">Nucleotide-binding</keyword>
<keyword id="KW-0648">Protein biosynthesis</keyword>
<organism>
    <name type="scientific">Cereibacter sphaeroides (strain ATCC 17025 / ATH 2.4.3)</name>
    <name type="common">Rhodobacter sphaeroides</name>
    <dbReference type="NCBI Taxonomy" id="349102"/>
    <lineage>
        <taxon>Bacteria</taxon>
        <taxon>Pseudomonadati</taxon>
        <taxon>Pseudomonadota</taxon>
        <taxon>Alphaproteobacteria</taxon>
        <taxon>Rhodobacterales</taxon>
        <taxon>Paracoccaceae</taxon>
        <taxon>Cereibacter</taxon>
    </lineage>
</organism>
<sequence length="95" mass="10493">MSIDIETARRVAHLARIRVDEADLPALAGELSGILTFMEQLNEVDVEGVEPMTSVTPMRLKRRQDVVTDGDMQDKVLANAPDAREGFFAVPKVVE</sequence>
<feature type="chain" id="PRO_1000016199" description="Aspartyl/glutamyl-tRNA(Asn/Gln) amidotransferase subunit C">
    <location>
        <begin position="1"/>
        <end position="95"/>
    </location>
</feature>
<name>GATC_CERS5</name>
<protein>
    <recommendedName>
        <fullName evidence="1">Aspartyl/glutamyl-tRNA(Asn/Gln) amidotransferase subunit C</fullName>
        <shortName evidence="1">Asp/Glu-ADT subunit C</shortName>
        <ecNumber evidence="1">6.3.5.-</ecNumber>
    </recommendedName>
</protein>
<evidence type="ECO:0000255" key="1">
    <source>
        <dbReference type="HAMAP-Rule" id="MF_00122"/>
    </source>
</evidence>
<accession>A4WUQ3</accession>